<sequence>MQTTWQPTASMEQLRQRAALITAIRQFFAERQVMEVDTPAMSHATVTDIHLHTFQTEFVGPGYADGSKLFFMTSPEFHMKRLLAAGSGCIYQINKAFRNEENGRHHNPEFTMLEWYRIGFDHHKLMDEMDDLLQLVLKCGAAERMTYQQAFIDVLGVCPLEGSMQELKVVAAKLGLSDIAEPEEDRDTLLQLLSSIGVEAKIGQQVPAFVYDFPASQAALAKINPQDIRVADRFEVYFKGIELANGFHELDNPKEQLARFEQDNAKRLDMGLKPQPIDYHLIGALEAGLPDCAGVALGVDRLIMLALGCDHIDQVTAFPFPIA</sequence>
<comment type="function">
    <text evidence="1">With EpmB is involved in the beta-lysylation step of the post-translational modification of translation elongation factor P (EF-P). Catalyzes the ATP-dependent activation of (R)-beta-lysine produced by EpmB, forming a lysyl-adenylate, from which the beta-lysyl moiety is then transferred to the epsilon-amino group of a conserved specific lysine residue in EF-P.</text>
</comment>
<comment type="catalytic activity">
    <reaction evidence="1">
        <text>D-beta-lysine + L-lysyl-[protein] + ATP = N(6)-((3R)-3,6-diaminohexanoyl)-L-lysyl-[protein] + AMP + diphosphate + H(+)</text>
        <dbReference type="Rhea" id="RHEA:83435"/>
        <dbReference type="Rhea" id="RHEA-COMP:9752"/>
        <dbReference type="Rhea" id="RHEA-COMP:20131"/>
        <dbReference type="ChEBI" id="CHEBI:15378"/>
        <dbReference type="ChEBI" id="CHEBI:29969"/>
        <dbReference type="ChEBI" id="CHEBI:30616"/>
        <dbReference type="ChEBI" id="CHEBI:33019"/>
        <dbReference type="ChEBI" id="CHEBI:84138"/>
        <dbReference type="ChEBI" id="CHEBI:156053"/>
        <dbReference type="ChEBI" id="CHEBI:456215"/>
    </reaction>
    <physiologicalReaction direction="left-to-right" evidence="1">
        <dbReference type="Rhea" id="RHEA:83436"/>
    </physiologicalReaction>
</comment>
<comment type="subunit">
    <text evidence="1">Homodimer.</text>
</comment>
<comment type="similarity">
    <text evidence="1">Belongs to the class-II aminoacyl-tRNA synthetase family. EpmA subfamily.</text>
</comment>
<reference key="1">
    <citation type="submission" date="2007-08" db="EMBL/GenBank/DDBJ databases">
        <authorList>
            <consortium name="The Vibrio harveyi Genome Sequencing Project"/>
            <person name="Bassler B."/>
            <person name="Clifton S.W."/>
            <person name="Fulton L."/>
            <person name="Delehaunty K."/>
            <person name="Fronick C."/>
            <person name="Harrison M."/>
            <person name="Markivic C."/>
            <person name="Fulton R."/>
            <person name="Tin-Wollam A.-M."/>
            <person name="Shah N."/>
            <person name="Pepin K."/>
            <person name="Nash W."/>
            <person name="Thiruvilangam P."/>
            <person name="Bhonagiri V."/>
            <person name="Waters C."/>
            <person name="Tu K.C."/>
            <person name="Irgon J."/>
            <person name="Wilson R.K."/>
        </authorList>
    </citation>
    <scope>NUCLEOTIDE SEQUENCE [LARGE SCALE GENOMIC DNA]</scope>
    <source>
        <strain>ATCC BAA-1116 / BB120</strain>
    </source>
</reference>
<dbReference type="EC" id="6.3.2.-" evidence="1"/>
<dbReference type="EMBL" id="CP000789">
    <property type="protein sequence ID" value="ABU69178.1"/>
    <property type="molecule type" value="Genomic_DNA"/>
</dbReference>
<dbReference type="RefSeq" id="WP_012126493.1">
    <property type="nucleotide sequence ID" value="NC_009783.1"/>
</dbReference>
<dbReference type="SMR" id="A7MX66"/>
<dbReference type="KEGG" id="vha:VIBHAR_00130"/>
<dbReference type="PATRIC" id="fig|338187.25.peg.2403"/>
<dbReference type="Proteomes" id="UP000008152">
    <property type="component" value="Chromosome I"/>
</dbReference>
<dbReference type="GO" id="GO:0005829">
    <property type="term" value="C:cytosol"/>
    <property type="evidence" value="ECO:0007669"/>
    <property type="project" value="TreeGrafter"/>
</dbReference>
<dbReference type="GO" id="GO:0016880">
    <property type="term" value="F:acid-ammonia (or amide) ligase activity"/>
    <property type="evidence" value="ECO:0007669"/>
    <property type="project" value="UniProtKB-UniRule"/>
</dbReference>
<dbReference type="GO" id="GO:0005524">
    <property type="term" value="F:ATP binding"/>
    <property type="evidence" value="ECO:0007669"/>
    <property type="project" value="UniProtKB-UniRule"/>
</dbReference>
<dbReference type="GO" id="GO:0004824">
    <property type="term" value="F:lysine-tRNA ligase activity"/>
    <property type="evidence" value="ECO:0007669"/>
    <property type="project" value="InterPro"/>
</dbReference>
<dbReference type="GO" id="GO:0000049">
    <property type="term" value="F:tRNA binding"/>
    <property type="evidence" value="ECO:0007669"/>
    <property type="project" value="TreeGrafter"/>
</dbReference>
<dbReference type="GO" id="GO:0006430">
    <property type="term" value="P:lysyl-tRNA aminoacylation"/>
    <property type="evidence" value="ECO:0007669"/>
    <property type="project" value="InterPro"/>
</dbReference>
<dbReference type="FunFam" id="3.30.930.10:FF:000017">
    <property type="entry name" value="Elongation factor P--(R)-beta-lysine ligase"/>
    <property type="match status" value="1"/>
</dbReference>
<dbReference type="Gene3D" id="3.30.930.10">
    <property type="entry name" value="Bira Bifunctional Protein, Domain 2"/>
    <property type="match status" value="1"/>
</dbReference>
<dbReference type="HAMAP" id="MF_00174">
    <property type="entry name" value="EF_P_modif_A"/>
    <property type="match status" value="1"/>
</dbReference>
<dbReference type="InterPro" id="IPR004364">
    <property type="entry name" value="Aa-tRNA-synt_II"/>
</dbReference>
<dbReference type="InterPro" id="IPR006195">
    <property type="entry name" value="aa-tRNA-synth_II"/>
</dbReference>
<dbReference type="InterPro" id="IPR045864">
    <property type="entry name" value="aa-tRNA-synth_II/BPL/LPL"/>
</dbReference>
<dbReference type="InterPro" id="IPR004525">
    <property type="entry name" value="EpmA"/>
</dbReference>
<dbReference type="NCBIfam" id="TIGR00462">
    <property type="entry name" value="genX"/>
    <property type="match status" value="1"/>
</dbReference>
<dbReference type="NCBIfam" id="NF006828">
    <property type="entry name" value="PRK09350.1"/>
    <property type="match status" value="1"/>
</dbReference>
<dbReference type="PANTHER" id="PTHR42918:SF6">
    <property type="entry name" value="ELONGATION FACTOR P--(R)-BETA-LYSINE LIGASE"/>
    <property type="match status" value="1"/>
</dbReference>
<dbReference type="PANTHER" id="PTHR42918">
    <property type="entry name" value="LYSYL-TRNA SYNTHETASE"/>
    <property type="match status" value="1"/>
</dbReference>
<dbReference type="Pfam" id="PF00152">
    <property type="entry name" value="tRNA-synt_2"/>
    <property type="match status" value="1"/>
</dbReference>
<dbReference type="SUPFAM" id="SSF55681">
    <property type="entry name" value="Class II aaRS and biotin synthetases"/>
    <property type="match status" value="1"/>
</dbReference>
<dbReference type="PROSITE" id="PS50862">
    <property type="entry name" value="AA_TRNA_LIGASE_II"/>
    <property type="match status" value="1"/>
</dbReference>
<feature type="chain" id="PRO_1000023633" description="Elongation factor P--(R)-beta-lysine ligase">
    <location>
        <begin position="1"/>
        <end position="323"/>
    </location>
</feature>
<feature type="binding site" evidence="1">
    <location>
        <begin position="74"/>
        <end position="76"/>
    </location>
    <ligand>
        <name>substrate</name>
    </ligand>
</feature>
<feature type="binding site" evidence="1">
    <location>
        <begin position="98"/>
        <end position="100"/>
    </location>
    <ligand>
        <name>ATP</name>
        <dbReference type="ChEBI" id="CHEBI:30616"/>
    </ligand>
</feature>
<feature type="binding site" evidence="1">
    <location>
        <position position="107"/>
    </location>
    <ligand>
        <name>ATP</name>
        <dbReference type="ChEBI" id="CHEBI:30616"/>
    </ligand>
</feature>
<feature type="binding site" evidence="1">
    <location>
        <position position="116"/>
    </location>
    <ligand>
        <name>substrate</name>
    </ligand>
</feature>
<feature type="binding site" evidence="1">
    <location>
        <begin position="242"/>
        <end position="243"/>
    </location>
    <ligand>
        <name>ATP</name>
        <dbReference type="ChEBI" id="CHEBI:30616"/>
    </ligand>
</feature>
<feature type="binding site" evidence="1">
    <location>
        <position position="249"/>
    </location>
    <ligand>
        <name>substrate</name>
    </ligand>
</feature>
<feature type="binding site" evidence="1">
    <location>
        <position position="298"/>
    </location>
    <ligand>
        <name>ATP</name>
        <dbReference type="ChEBI" id="CHEBI:30616"/>
    </ligand>
</feature>
<gene>
    <name evidence="1" type="primary">epmA</name>
    <name type="synonym">yjeA</name>
    <name type="ordered locus">VIBHAR_00130</name>
</gene>
<name>EPMA_VIBC1</name>
<accession>A7MX66</accession>
<keyword id="KW-0067">ATP-binding</keyword>
<keyword id="KW-0436">Ligase</keyword>
<keyword id="KW-0547">Nucleotide-binding</keyword>
<proteinExistence type="inferred from homology"/>
<organism>
    <name type="scientific">Vibrio campbellii (strain ATCC BAA-1116)</name>
    <dbReference type="NCBI Taxonomy" id="2902295"/>
    <lineage>
        <taxon>Bacteria</taxon>
        <taxon>Pseudomonadati</taxon>
        <taxon>Pseudomonadota</taxon>
        <taxon>Gammaproteobacteria</taxon>
        <taxon>Vibrionales</taxon>
        <taxon>Vibrionaceae</taxon>
        <taxon>Vibrio</taxon>
    </lineage>
</organism>
<protein>
    <recommendedName>
        <fullName evidence="1">Elongation factor P--(R)-beta-lysine ligase</fullName>
        <shortName evidence="1">EF-P--(R)-beta-lysine ligase</shortName>
        <ecNumber evidence="1">6.3.2.-</ecNumber>
    </recommendedName>
    <alternativeName>
        <fullName evidence="1">EF-P post-translational modification enzyme A</fullName>
    </alternativeName>
    <alternativeName>
        <fullName evidence="1">EF-P-lysine lysyltransferase</fullName>
    </alternativeName>
</protein>
<evidence type="ECO:0000255" key="1">
    <source>
        <dbReference type="HAMAP-Rule" id="MF_00174"/>
    </source>
</evidence>